<feature type="chain" id="PRO_1000149390" description="Probable D-serine dehydratase">
    <location>
        <begin position="1"/>
        <end position="440"/>
    </location>
</feature>
<feature type="modified residue" description="N6-(pyridoxal phosphate)lysine" evidence="1">
    <location>
        <position position="111"/>
    </location>
</feature>
<dbReference type="EC" id="4.3.1.18" evidence="1"/>
<dbReference type="EMBL" id="CP001191">
    <property type="protein sequence ID" value="ACI54911.1"/>
    <property type="molecule type" value="Genomic_DNA"/>
</dbReference>
<dbReference type="RefSeq" id="WP_012557571.1">
    <property type="nucleotide sequence ID" value="NC_011369.1"/>
</dbReference>
<dbReference type="SMR" id="B5ZNC1"/>
<dbReference type="STRING" id="395492.Rleg2_1621"/>
<dbReference type="KEGG" id="rlt:Rleg2_1621"/>
<dbReference type="eggNOG" id="COG3048">
    <property type="taxonomic scope" value="Bacteria"/>
</dbReference>
<dbReference type="HOGENOM" id="CLU_035707_0_0_5"/>
<dbReference type="Proteomes" id="UP000008330">
    <property type="component" value="Chromosome"/>
</dbReference>
<dbReference type="GO" id="GO:0008721">
    <property type="term" value="F:D-serine ammonia-lyase activity"/>
    <property type="evidence" value="ECO:0007669"/>
    <property type="project" value="UniProtKB-EC"/>
</dbReference>
<dbReference type="GO" id="GO:0016836">
    <property type="term" value="F:hydro-lyase activity"/>
    <property type="evidence" value="ECO:0007669"/>
    <property type="project" value="UniProtKB-UniRule"/>
</dbReference>
<dbReference type="GO" id="GO:0030170">
    <property type="term" value="F:pyridoxal phosphate binding"/>
    <property type="evidence" value="ECO:0007669"/>
    <property type="project" value="InterPro"/>
</dbReference>
<dbReference type="GO" id="GO:0036088">
    <property type="term" value="P:D-serine catabolic process"/>
    <property type="evidence" value="ECO:0007669"/>
    <property type="project" value="TreeGrafter"/>
</dbReference>
<dbReference type="GO" id="GO:0009097">
    <property type="term" value="P:isoleucine biosynthetic process"/>
    <property type="evidence" value="ECO:0007669"/>
    <property type="project" value="TreeGrafter"/>
</dbReference>
<dbReference type="Gene3D" id="3.40.50.1100">
    <property type="match status" value="2"/>
</dbReference>
<dbReference type="HAMAP" id="MF_01030">
    <property type="entry name" value="D_Ser_dehydrat"/>
    <property type="match status" value="1"/>
</dbReference>
<dbReference type="InterPro" id="IPR011780">
    <property type="entry name" value="D_Ser_am_lyase"/>
</dbReference>
<dbReference type="InterPro" id="IPR050147">
    <property type="entry name" value="Ser/Thr_Dehydratase"/>
</dbReference>
<dbReference type="InterPro" id="IPR001926">
    <property type="entry name" value="TrpB-like_PALP"/>
</dbReference>
<dbReference type="InterPro" id="IPR036052">
    <property type="entry name" value="TrpB-like_PALP_sf"/>
</dbReference>
<dbReference type="NCBIfam" id="TIGR02035">
    <property type="entry name" value="D_Ser_am_lyase"/>
    <property type="match status" value="1"/>
</dbReference>
<dbReference type="NCBIfam" id="NF002823">
    <property type="entry name" value="PRK02991.1"/>
    <property type="match status" value="1"/>
</dbReference>
<dbReference type="PANTHER" id="PTHR48078:SF9">
    <property type="entry name" value="D-SERINE DEHYDRATASE"/>
    <property type="match status" value="1"/>
</dbReference>
<dbReference type="PANTHER" id="PTHR48078">
    <property type="entry name" value="THREONINE DEHYDRATASE, MITOCHONDRIAL-RELATED"/>
    <property type="match status" value="1"/>
</dbReference>
<dbReference type="Pfam" id="PF00291">
    <property type="entry name" value="PALP"/>
    <property type="match status" value="1"/>
</dbReference>
<dbReference type="SUPFAM" id="SSF53686">
    <property type="entry name" value="Tryptophan synthase beta subunit-like PLP-dependent enzymes"/>
    <property type="match status" value="1"/>
</dbReference>
<evidence type="ECO:0000255" key="1">
    <source>
        <dbReference type="HAMAP-Rule" id="MF_01030"/>
    </source>
</evidence>
<name>SDHD_RHILW</name>
<protein>
    <recommendedName>
        <fullName evidence="1">Probable D-serine dehydratase</fullName>
        <ecNumber evidence="1">4.3.1.18</ecNumber>
    </recommendedName>
    <alternativeName>
        <fullName evidence="1">D-serine deaminase</fullName>
        <shortName evidence="1">DSD</shortName>
    </alternativeName>
</protein>
<keyword id="KW-0456">Lyase</keyword>
<keyword id="KW-0663">Pyridoxal phosphate</keyword>
<keyword id="KW-1185">Reference proteome</keyword>
<accession>B5ZNC1</accession>
<sequence length="440" mass="48178">MNTILPADPARDEVLAGRPTLWVNPSYRKRAIDTSDLPVSRDDVQIARLNWQRLAPLLAECFPELKDSDGEIRSELVELKELREALGYRTREFGNVFIKADSHLPVAGSIKARGGVYEVFLFAENLARQNGLLGDGEDIRKLAAEEARSFFSGYTVAVGSTGNLGLSVGIAARALGFKATVHMSSDAKAWKVERLRRLGVEVIQHEADYTSAVENARDIADADPTIYFVDDEQSRHLFLGYSAAASELAAQLDERGITIDEENPLFLYLPCGIGGAPGGVAFGAKAIFGDNVHAFFVEPVQSPCTLVHMMSGSQELVSVYDVGLTNKTEADGMAVARMSAFVAKVMREMLAGVYTAADDDLFKLLRMAWITQRQKLEPSAAAALLGPHFLVHHGEGRRFQAEQGIEEKMSRATHILWTTGGSFVPEEQFQNFLRQAEAVG</sequence>
<reference key="1">
    <citation type="journal article" date="2010" name="Stand. Genomic Sci.">
        <title>Complete genome sequence of Rhizobium leguminosarum bv trifolii strain WSM2304, an effective microsymbiont of the South American clover Trifolium polymorphum.</title>
        <authorList>
            <person name="Reeve W."/>
            <person name="O'Hara G."/>
            <person name="Chain P."/>
            <person name="Ardley J."/>
            <person name="Brau L."/>
            <person name="Nandesena K."/>
            <person name="Tiwari R."/>
            <person name="Malfatti S."/>
            <person name="Kiss H."/>
            <person name="Lapidus A."/>
            <person name="Copeland A."/>
            <person name="Nolan M."/>
            <person name="Land M."/>
            <person name="Ivanova N."/>
            <person name="Mavromatis K."/>
            <person name="Markowitz V."/>
            <person name="Kyrpides N."/>
            <person name="Melino V."/>
            <person name="Denton M."/>
            <person name="Yates R."/>
            <person name="Howieson J."/>
        </authorList>
    </citation>
    <scope>NUCLEOTIDE SEQUENCE [LARGE SCALE GENOMIC DNA]</scope>
    <source>
        <strain>WSM2304</strain>
    </source>
</reference>
<proteinExistence type="inferred from homology"/>
<comment type="catalytic activity">
    <reaction evidence="1">
        <text>D-serine = pyruvate + NH4(+)</text>
        <dbReference type="Rhea" id="RHEA:13977"/>
        <dbReference type="ChEBI" id="CHEBI:15361"/>
        <dbReference type="ChEBI" id="CHEBI:28938"/>
        <dbReference type="ChEBI" id="CHEBI:35247"/>
        <dbReference type="EC" id="4.3.1.18"/>
    </reaction>
</comment>
<comment type="cofactor">
    <cofactor evidence="1">
        <name>pyridoxal 5'-phosphate</name>
        <dbReference type="ChEBI" id="CHEBI:597326"/>
    </cofactor>
</comment>
<comment type="similarity">
    <text evidence="1">Belongs to the serine/threonine dehydratase family. DsdA subfamily.</text>
</comment>
<gene>
    <name evidence="1" type="primary">dsdA</name>
    <name type="ordered locus">Rleg2_1621</name>
</gene>
<organism>
    <name type="scientific">Rhizobium leguminosarum bv. trifolii (strain WSM2304)</name>
    <dbReference type="NCBI Taxonomy" id="395492"/>
    <lineage>
        <taxon>Bacteria</taxon>
        <taxon>Pseudomonadati</taxon>
        <taxon>Pseudomonadota</taxon>
        <taxon>Alphaproteobacteria</taxon>
        <taxon>Hyphomicrobiales</taxon>
        <taxon>Rhizobiaceae</taxon>
        <taxon>Rhizobium/Agrobacterium group</taxon>
        <taxon>Rhizobium</taxon>
    </lineage>
</organism>